<proteinExistence type="evidence at transcript level"/>
<dbReference type="EMBL" id="AF488594">
    <property type="protein sequence ID" value="AAM10950.1"/>
    <property type="molecule type" value="mRNA"/>
</dbReference>
<dbReference type="EMBL" id="AL353995">
    <property type="protein sequence ID" value="CAB89386.1"/>
    <property type="molecule type" value="Genomic_DNA"/>
</dbReference>
<dbReference type="EMBL" id="CP002688">
    <property type="protein sequence ID" value="AED91564.1"/>
    <property type="molecule type" value="Genomic_DNA"/>
</dbReference>
<dbReference type="PIR" id="T49982">
    <property type="entry name" value="T49982"/>
</dbReference>
<dbReference type="RefSeq" id="NP_196619.1">
    <property type="nucleotide sequence ID" value="NM_121095.4"/>
</dbReference>
<dbReference type="SMR" id="Q9LXA9"/>
<dbReference type="BioGRID" id="16200">
    <property type="interactions" value="16"/>
</dbReference>
<dbReference type="FunCoup" id="Q9LXA9">
    <property type="interactions" value="113"/>
</dbReference>
<dbReference type="IntAct" id="Q9LXA9">
    <property type="interactions" value="18"/>
</dbReference>
<dbReference type="STRING" id="3702.Q9LXA9"/>
<dbReference type="iPTMnet" id="Q9LXA9"/>
<dbReference type="PaxDb" id="3702-AT5G10570.1"/>
<dbReference type="EnsemblPlants" id="AT5G10570.1">
    <property type="protein sequence ID" value="AT5G10570.1"/>
    <property type="gene ID" value="AT5G10570"/>
</dbReference>
<dbReference type="GeneID" id="830922"/>
<dbReference type="Gramene" id="AT5G10570.1">
    <property type="protein sequence ID" value="AT5G10570.1"/>
    <property type="gene ID" value="AT5G10570"/>
</dbReference>
<dbReference type="KEGG" id="ath:AT5G10570"/>
<dbReference type="Araport" id="AT5G10570"/>
<dbReference type="TAIR" id="AT5G10570"/>
<dbReference type="eggNOG" id="ENOG502QQHH">
    <property type="taxonomic scope" value="Eukaryota"/>
</dbReference>
<dbReference type="HOGENOM" id="CLU_035660_1_0_1"/>
<dbReference type="InParanoid" id="Q9LXA9"/>
<dbReference type="OMA" id="DICCPTK"/>
<dbReference type="OrthoDB" id="752464at2759"/>
<dbReference type="PhylomeDB" id="Q9LXA9"/>
<dbReference type="PRO" id="PR:Q9LXA9"/>
<dbReference type="Proteomes" id="UP000006548">
    <property type="component" value="Chromosome 5"/>
</dbReference>
<dbReference type="ExpressionAtlas" id="Q9LXA9">
    <property type="expression patterns" value="baseline and differential"/>
</dbReference>
<dbReference type="GO" id="GO:0005634">
    <property type="term" value="C:nucleus"/>
    <property type="evidence" value="ECO:0007669"/>
    <property type="project" value="UniProtKB-SubCell"/>
</dbReference>
<dbReference type="GO" id="GO:0003677">
    <property type="term" value="F:DNA binding"/>
    <property type="evidence" value="ECO:0007669"/>
    <property type="project" value="UniProtKB-KW"/>
</dbReference>
<dbReference type="GO" id="GO:0003700">
    <property type="term" value="F:DNA-binding transcription factor activity"/>
    <property type="evidence" value="ECO:0000250"/>
    <property type="project" value="TAIR"/>
</dbReference>
<dbReference type="GO" id="GO:0046983">
    <property type="term" value="F:protein dimerization activity"/>
    <property type="evidence" value="ECO:0007669"/>
    <property type="project" value="InterPro"/>
</dbReference>
<dbReference type="GO" id="GO:0006355">
    <property type="term" value="P:regulation of DNA-templated transcription"/>
    <property type="evidence" value="ECO:0000304"/>
    <property type="project" value="TAIR"/>
</dbReference>
<dbReference type="CDD" id="cd11443">
    <property type="entry name" value="bHLH_AtAMS_like"/>
    <property type="match status" value="1"/>
</dbReference>
<dbReference type="Gene3D" id="4.10.280.10">
    <property type="entry name" value="Helix-loop-helix DNA-binding domain"/>
    <property type="match status" value="1"/>
</dbReference>
<dbReference type="InterPro" id="IPR054502">
    <property type="entry name" value="bHLH-TF_ACT-like_plant"/>
</dbReference>
<dbReference type="InterPro" id="IPR011598">
    <property type="entry name" value="bHLH_dom"/>
</dbReference>
<dbReference type="InterPro" id="IPR036638">
    <property type="entry name" value="HLH_DNA-bd_sf"/>
</dbReference>
<dbReference type="InterPro" id="IPR051358">
    <property type="entry name" value="TF_AMS/ICE1/BHLH6-like"/>
</dbReference>
<dbReference type="PANTHER" id="PTHR31945:SF15">
    <property type="entry name" value="TRANSCRIPTION FACTOR BHLH61-RELATED"/>
    <property type="match status" value="1"/>
</dbReference>
<dbReference type="PANTHER" id="PTHR31945">
    <property type="entry name" value="TRANSCRIPTION FACTOR SCREAM2-RELATED"/>
    <property type="match status" value="1"/>
</dbReference>
<dbReference type="Pfam" id="PF22754">
    <property type="entry name" value="bHLH-TF_ACT-like_plant"/>
    <property type="match status" value="1"/>
</dbReference>
<dbReference type="Pfam" id="PF00010">
    <property type="entry name" value="HLH"/>
    <property type="match status" value="1"/>
</dbReference>
<dbReference type="SMART" id="SM00353">
    <property type="entry name" value="HLH"/>
    <property type="match status" value="1"/>
</dbReference>
<dbReference type="SUPFAM" id="SSF47459">
    <property type="entry name" value="HLH, helix-loop-helix DNA-binding domain"/>
    <property type="match status" value="1"/>
</dbReference>
<dbReference type="PROSITE" id="PS50888">
    <property type="entry name" value="BHLH"/>
    <property type="match status" value="1"/>
</dbReference>
<sequence length="315" mass="35554">METELTQLRKQESNNLNGVNGGFMAIDQFVPNDWNFDYLCFNNLLQEDDNIDHPSSSSLMNLISQPPPLLHQPPQPSSPLYDSPPLSSAFDYPFLEDIIHSSYSPPPLILPASQENTNNYSPLMEESKSFISIGETNKKRSNKKLEGQPSKNLMAERRRRKRLNDRLSLLRSIVPKITKMDRTSILGDAIDYMKELLDKINKLQEDEQELGSNSHLSTLITNESMVRNSLKFEVDQREVNTHIDICCPTKPGLVVSTVSTLETLGLEIEQCVISCFSDFSLQASCFEVGEQRYMVTSEATKQALIRNAGYGGRCL</sequence>
<comment type="subunit">
    <text evidence="4">Homodimer.</text>
</comment>
<comment type="subcellular location">
    <subcellularLocation>
        <location evidence="1">Nucleus</location>
    </subcellularLocation>
</comment>
<comment type="tissue specificity">
    <text evidence="3">Expressed constitutively in leaves and flowers.</text>
</comment>
<keyword id="KW-0238">DNA-binding</keyword>
<keyword id="KW-0539">Nucleus</keyword>
<keyword id="KW-1185">Reference proteome</keyword>
<keyword id="KW-0804">Transcription</keyword>
<keyword id="KW-0805">Transcription regulation</keyword>
<protein>
    <recommendedName>
        <fullName>Transcription factor bHLH61</fullName>
    </recommendedName>
    <alternativeName>
        <fullName>Basic helix-loop-helix protein 61</fullName>
        <shortName>AtbHLH61</shortName>
        <shortName>bHLH 61</shortName>
    </alternativeName>
    <alternativeName>
        <fullName>Transcription factor EN 46</fullName>
    </alternativeName>
    <alternativeName>
        <fullName>bHLH transcription factor bHLH061</fullName>
    </alternativeName>
</protein>
<evidence type="ECO:0000255" key="1">
    <source>
        <dbReference type="PROSITE-ProRule" id="PRU00981"/>
    </source>
</evidence>
<evidence type="ECO:0000256" key="2">
    <source>
        <dbReference type="SAM" id="MobiDB-lite"/>
    </source>
</evidence>
<evidence type="ECO:0000269" key="3">
    <source>
    </source>
</evidence>
<evidence type="ECO:0000305" key="4"/>
<gene>
    <name type="primary">BHLH61</name>
    <name type="synonym">EN46</name>
    <name type="ordered locus">At5g10570</name>
    <name type="ORF">F12B17.80</name>
</gene>
<name>BH061_ARATH</name>
<feature type="chain" id="PRO_0000358756" description="Transcription factor bHLH61">
    <location>
        <begin position="1"/>
        <end position="315"/>
    </location>
</feature>
<feature type="domain" description="bHLH" evidence="1">
    <location>
        <begin position="147"/>
        <end position="196"/>
    </location>
</feature>
<feature type="region of interest" description="Disordered" evidence="2">
    <location>
        <begin position="56"/>
        <end position="83"/>
    </location>
</feature>
<feature type="compositionally biased region" description="Pro residues" evidence="2">
    <location>
        <begin position="65"/>
        <end position="77"/>
    </location>
</feature>
<feature type="sequence conflict" description="In Ref. 1; AAM10950." evidence="4" ref="1">
    <original>V</original>
    <variation>A</variation>
    <location>
        <position position="19"/>
    </location>
</feature>
<reference key="1">
    <citation type="journal article" date="2003" name="Mol. Biol. Evol.">
        <title>The basic helix-loop-helix transcription factor family in plants: a genome-wide study of protein structure and functional diversity.</title>
        <authorList>
            <person name="Heim M.A."/>
            <person name="Jakoby M."/>
            <person name="Werber M."/>
            <person name="Martin C."/>
            <person name="Weisshaar B."/>
            <person name="Bailey P.C."/>
        </authorList>
    </citation>
    <scope>NUCLEOTIDE SEQUENCE [MRNA]</scope>
    <scope>TISSUE SPECIFICITY</scope>
    <scope>GENE FAMILY</scope>
    <scope>NOMENCLATURE</scope>
    <source>
        <strain>cv. Columbia</strain>
        <tissue>Flower</tissue>
    </source>
</reference>
<reference key="2">
    <citation type="journal article" date="2000" name="Nature">
        <title>Sequence and analysis of chromosome 5 of the plant Arabidopsis thaliana.</title>
        <authorList>
            <person name="Tabata S."/>
            <person name="Kaneko T."/>
            <person name="Nakamura Y."/>
            <person name="Kotani H."/>
            <person name="Kato T."/>
            <person name="Asamizu E."/>
            <person name="Miyajima N."/>
            <person name="Sasamoto S."/>
            <person name="Kimura T."/>
            <person name="Hosouchi T."/>
            <person name="Kawashima K."/>
            <person name="Kohara M."/>
            <person name="Matsumoto M."/>
            <person name="Matsuno A."/>
            <person name="Muraki A."/>
            <person name="Nakayama S."/>
            <person name="Nakazaki N."/>
            <person name="Naruo K."/>
            <person name="Okumura S."/>
            <person name="Shinpo S."/>
            <person name="Takeuchi C."/>
            <person name="Wada T."/>
            <person name="Watanabe A."/>
            <person name="Yamada M."/>
            <person name="Yasuda M."/>
            <person name="Sato S."/>
            <person name="de la Bastide M."/>
            <person name="Huang E."/>
            <person name="Spiegel L."/>
            <person name="Gnoj L."/>
            <person name="O'Shaughnessy A."/>
            <person name="Preston R."/>
            <person name="Habermann K."/>
            <person name="Murray J."/>
            <person name="Johnson D."/>
            <person name="Rohlfing T."/>
            <person name="Nelson J."/>
            <person name="Stoneking T."/>
            <person name="Pepin K."/>
            <person name="Spieth J."/>
            <person name="Sekhon M."/>
            <person name="Armstrong J."/>
            <person name="Becker M."/>
            <person name="Belter E."/>
            <person name="Cordum H."/>
            <person name="Cordes M."/>
            <person name="Courtney L."/>
            <person name="Courtney W."/>
            <person name="Dante M."/>
            <person name="Du H."/>
            <person name="Edwards J."/>
            <person name="Fryman J."/>
            <person name="Haakensen B."/>
            <person name="Lamar E."/>
            <person name="Latreille P."/>
            <person name="Leonard S."/>
            <person name="Meyer R."/>
            <person name="Mulvaney E."/>
            <person name="Ozersky P."/>
            <person name="Riley A."/>
            <person name="Strowmatt C."/>
            <person name="Wagner-McPherson C."/>
            <person name="Wollam A."/>
            <person name="Yoakum M."/>
            <person name="Bell M."/>
            <person name="Dedhia N."/>
            <person name="Parnell L."/>
            <person name="Shah R."/>
            <person name="Rodriguez M."/>
            <person name="Hoon See L."/>
            <person name="Vil D."/>
            <person name="Baker J."/>
            <person name="Kirchoff K."/>
            <person name="Toth K."/>
            <person name="King L."/>
            <person name="Bahret A."/>
            <person name="Miller B."/>
            <person name="Marra M.A."/>
            <person name="Martienssen R."/>
            <person name="McCombie W.R."/>
            <person name="Wilson R.K."/>
            <person name="Murphy G."/>
            <person name="Bancroft I."/>
            <person name="Volckaert G."/>
            <person name="Wambutt R."/>
            <person name="Duesterhoeft A."/>
            <person name="Stiekema W."/>
            <person name="Pohl T."/>
            <person name="Entian K.-D."/>
            <person name="Terryn N."/>
            <person name="Hartley N."/>
            <person name="Bent E."/>
            <person name="Johnson S."/>
            <person name="Langham S.-A."/>
            <person name="McCullagh B."/>
            <person name="Robben J."/>
            <person name="Grymonprez B."/>
            <person name="Zimmermann W."/>
            <person name="Ramsperger U."/>
            <person name="Wedler H."/>
            <person name="Balke K."/>
            <person name="Wedler E."/>
            <person name="Peters S."/>
            <person name="van Staveren M."/>
            <person name="Dirkse W."/>
            <person name="Mooijman P."/>
            <person name="Klein Lankhorst R."/>
            <person name="Weitzenegger T."/>
            <person name="Bothe G."/>
            <person name="Rose M."/>
            <person name="Hauf J."/>
            <person name="Berneiser S."/>
            <person name="Hempel S."/>
            <person name="Feldpausch M."/>
            <person name="Lamberth S."/>
            <person name="Villarroel R."/>
            <person name="Gielen J."/>
            <person name="Ardiles W."/>
            <person name="Bents O."/>
            <person name="Lemcke K."/>
            <person name="Kolesov G."/>
            <person name="Mayer K.F.X."/>
            <person name="Rudd S."/>
            <person name="Schoof H."/>
            <person name="Schueller C."/>
            <person name="Zaccaria P."/>
            <person name="Mewes H.-W."/>
            <person name="Bevan M."/>
            <person name="Fransz P.F."/>
        </authorList>
    </citation>
    <scope>NUCLEOTIDE SEQUENCE [LARGE SCALE GENOMIC DNA]</scope>
    <source>
        <strain>cv. Columbia</strain>
    </source>
</reference>
<reference key="3">
    <citation type="journal article" date="2017" name="Plant J.">
        <title>Araport11: a complete reannotation of the Arabidopsis thaliana reference genome.</title>
        <authorList>
            <person name="Cheng C.Y."/>
            <person name="Krishnakumar V."/>
            <person name="Chan A.P."/>
            <person name="Thibaud-Nissen F."/>
            <person name="Schobel S."/>
            <person name="Town C.D."/>
        </authorList>
    </citation>
    <scope>GENOME REANNOTATION</scope>
    <source>
        <strain>cv. Columbia</strain>
    </source>
</reference>
<reference key="4">
    <citation type="journal article" date="2003" name="Plant Cell">
        <title>The Arabidopsis basic/helix-loop-helix transcription factor family.</title>
        <authorList>
            <person name="Toledo-Ortiz G."/>
            <person name="Huq E."/>
            <person name="Quail P.H."/>
        </authorList>
    </citation>
    <scope>GENE FAMILY</scope>
</reference>
<reference key="5">
    <citation type="journal article" date="2003" name="Plant Cell">
        <title>Update on the basic helix-loop-helix transcription factor gene family in Arabidopsis thaliana.</title>
        <authorList>
            <person name="Bailey P.C."/>
            <person name="Martin C."/>
            <person name="Toledo-Ortiz G."/>
            <person name="Quail P.H."/>
            <person name="Huq E."/>
            <person name="Heim M.A."/>
            <person name="Jakoby M."/>
            <person name="Werber M."/>
            <person name="Weisshaar B."/>
        </authorList>
    </citation>
    <scope>GENE FAMILY</scope>
    <scope>NOMENCLATURE</scope>
</reference>
<accession>Q9LXA9</accession>
<accession>Q8S3E1</accession>
<organism>
    <name type="scientific">Arabidopsis thaliana</name>
    <name type="common">Mouse-ear cress</name>
    <dbReference type="NCBI Taxonomy" id="3702"/>
    <lineage>
        <taxon>Eukaryota</taxon>
        <taxon>Viridiplantae</taxon>
        <taxon>Streptophyta</taxon>
        <taxon>Embryophyta</taxon>
        <taxon>Tracheophyta</taxon>
        <taxon>Spermatophyta</taxon>
        <taxon>Magnoliopsida</taxon>
        <taxon>eudicotyledons</taxon>
        <taxon>Gunneridae</taxon>
        <taxon>Pentapetalae</taxon>
        <taxon>rosids</taxon>
        <taxon>malvids</taxon>
        <taxon>Brassicales</taxon>
        <taxon>Brassicaceae</taxon>
        <taxon>Camelineae</taxon>
        <taxon>Arabidopsis</taxon>
    </lineage>
</organism>